<reference key="1">
    <citation type="journal article" date="2007" name="PLoS ONE">
        <title>Paradoxical DNA repair and peroxide resistance gene conservation in Bacillus pumilus SAFR-032.</title>
        <authorList>
            <person name="Gioia J."/>
            <person name="Yerrapragada S."/>
            <person name="Qin X."/>
            <person name="Jiang H."/>
            <person name="Igboeli O.C."/>
            <person name="Muzny D."/>
            <person name="Dugan-Rocha S."/>
            <person name="Ding Y."/>
            <person name="Hawes A."/>
            <person name="Liu W."/>
            <person name="Perez L."/>
            <person name="Kovar C."/>
            <person name="Dinh H."/>
            <person name="Lee S."/>
            <person name="Nazareth L."/>
            <person name="Blyth P."/>
            <person name="Holder M."/>
            <person name="Buhay C."/>
            <person name="Tirumalai M.R."/>
            <person name="Liu Y."/>
            <person name="Dasgupta I."/>
            <person name="Bokhetache L."/>
            <person name="Fujita M."/>
            <person name="Karouia F."/>
            <person name="Eswara Moorthy P."/>
            <person name="Siefert J."/>
            <person name="Uzman A."/>
            <person name="Buzumbo P."/>
            <person name="Verma A."/>
            <person name="Zwiya H."/>
            <person name="McWilliams B.D."/>
            <person name="Olowu A."/>
            <person name="Clinkenbeard K.D."/>
            <person name="Newcombe D."/>
            <person name="Golebiewski L."/>
            <person name="Petrosino J.F."/>
            <person name="Nicholson W.L."/>
            <person name="Fox G.E."/>
            <person name="Venkateswaran K."/>
            <person name="Highlander S.K."/>
            <person name="Weinstock G.M."/>
        </authorList>
    </citation>
    <scope>NUCLEOTIDE SEQUENCE [LARGE SCALE GENOMIC DNA]</scope>
    <source>
        <strain>SAFR-032</strain>
    </source>
</reference>
<feature type="chain" id="PRO_1000082015" description="Succinate--CoA ligase [ADP-forming] subunit beta">
    <location>
        <begin position="1"/>
        <end position="386"/>
    </location>
</feature>
<feature type="domain" description="ATP-grasp" evidence="1">
    <location>
        <begin position="9"/>
        <end position="244"/>
    </location>
</feature>
<feature type="binding site" evidence="1">
    <location>
        <position position="46"/>
    </location>
    <ligand>
        <name>ATP</name>
        <dbReference type="ChEBI" id="CHEBI:30616"/>
    </ligand>
</feature>
<feature type="binding site" evidence="1">
    <location>
        <begin position="53"/>
        <end position="55"/>
    </location>
    <ligand>
        <name>ATP</name>
        <dbReference type="ChEBI" id="CHEBI:30616"/>
    </ligand>
</feature>
<feature type="binding site" evidence="1">
    <location>
        <position position="99"/>
    </location>
    <ligand>
        <name>ATP</name>
        <dbReference type="ChEBI" id="CHEBI:30616"/>
    </ligand>
</feature>
<feature type="binding site" evidence="1">
    <location>
        <position position="102"/>
    </location>
    <ligand>
        <name>ATP</name>
        <dbReference type="ChEBI" id="CHEBI:30616"/>
    </ligand>
</feature>
<feature type="binding site" evidence="1">
    <location>
        <position position="107"/>
    </location>
    <ligand>
        <name>ATP</name>
        <dbReference type="ChEBI" id="CHEBI:30616"/>
    </ligand>
</feature>
<feature type="binding site" evidence="1">
    <location>
        <position position="199"/>
    </location>
    <ligand>
        <name>Mg(2+)</name>
        <dbReference type="ChEBI" id="CHEBI:18420"/>
    </ligand>
</feature>
<feature type="binding site" evidence="1">
    <location>
        <position position="213"/>
    </location>
    <ligand>
        <name>Mg(2+)</name>
        <dbReference type="ChEBI" id="CHEBI:18420"/>
    </ligand>
</feature>
<feature type="binding site" evidence="1">
    <location>
        <position position="264"/>
    </location>
    <ligand>
        <name>substrate</name>
        <note>ligand shared with subunit alpha</note>
    </ligand>
</feature>
<feature type="binding site" evidence="1">
    <location>
        <begin position="321"/>
        <end position="323"/>
    </location>
    <ligand>
        <name>substrate</name>
        <note>ligand shared with subunit alpha</note>
    </ligand>
</feature>
<proteinExistence type="inferred from homology"/>
<dbReference type="EC" id="6.2.1.5" evidence="1"/>
<dbReference type="EMBL" id="CP000813">
    <property type="protein sequence ID" value="ABV62190.1"/>
    <property type="molecule type" value="Genomic_DNA"/>
</dbReference>
<dbReference type="RefSeq" id="WP_012009945.1">
    <property type="nucleotide sequence ID" value="NZ_VEIS01000003.1"/>
</dbReference>
<dbReference type="SMR" id="A8FD73"/>
<dbReference type="STRING" id="315750.BPUM_1507"/>
<dbReference type="GeneID" id="5620770"/>
<dbReference type="KEGG" id="bpu:BPUM_1507"/>
<dbReference type="eggNOG" id="COG0045">
    <property type="taxonomic scope" value="Bacteria"/>
</dbReference>
<dbReference type="HOGENOM" id="CLU_037430_0_2_9"/>
<dbReference type="OrthoDB" id="9802602at2"/>
<dbReference type="UniPathway" id="UPA00223">
    <property type="reaction ID" value="UER00999"/>
</dbReference>
<dbReference type="Proteomes" id="UP000001355">
    <property type="component" value="Chromosome"/>
</dbReference>
<dbReference type="GO" id="GO:0005829">
    <property type="term" value="C:cytosol"/>
    <property type="evidence" value="ECO:0007669"/>
    <property type="project" value="TreeGrafter"/>
</dbReference>
<dbReference type="GO" id="GO:0042709">
    <property type="term" value="C:succinate-CoA ligase complex"/>
    <property type="evidence" value="ECO:0007669"/>
    <property type="project" value="TreeGrafter"/>
</dbReference>
<dbReference type="GO" id="GO:0005524">
    <property type="term" value="F:ATP binding"/>
    <property type="evidence" value="ECO:0007669"/>
    <property type="project" value="UniProtKB-UniRule"/>
</dbReference>
<dbReference type="GO" id="GO:0000287">
    <property type="term" value="F:magnesium ion binding"/>
    <property type="evidence" value="ECO:0007669"/>
    <property type="project" value="UniProtKB-UniRule"/>
</dbReference>
<dbReference type="GO" id="GO:0004775">
    <property type="term" value="F:succinate-CoA ligase (ADP-forming) activity"/>
    <property type="evidence" value="ECO:0007669"/>
    <property type="project" value="UniProtKB-UniRule"/>
</dbReference>
<dbReference type="GO" id="GO:0004776">
    <property type="term" value="F:succinate-CoA ligase (GDP-forming) activity"/>
    <property type="evidence" value="ECO:0007669"/>
    <property type="project" value="RHEA"/>
</dbReference>
<dbReference type="GO" id="GO:0006104">
    <property type="term" value="P:succinyl-CoA metabolic process"/>
    <property type="evidence" value="ECO:0007669"/>
    <property type="project" value="TreeGrafter"/>
</dbReference>
<dbReference type="GO" id="GO:0006099">
    <property type="term" value="P:tricarboxylic acid cycle"/>
    <property type="evidence" value="ECO:0007669"/>
    <property type="project" value="UniProtKB-UniRule"/>
</dbReference>
<dbReference type="FunFam" id="3.30.1490.20:FF:000002">
    <property type="entry name" value="Succinate--CoA ligase [ADP-forming] subunit beta"/>
    <property type="match status" value="1"/>
</dbReference>
<dbReference type="FunFam" id="3.30.470.20:FF:000002">
    <property type="entry name" value="Succinate--CoA ligase [ADP-forming] subunit beta"/>
    <property type="match status" value="1"/>
</dbReference>
<dbReference type="FunFam" id="3.40.50.261:FF:000001">
    <property type="entry name" value="Succinate--CoA ligase [ADP-forming] subunit beta"/>
    <property type="match status" value="1"/>
</dbReference>
<dbReference type="Gene3D" id="3.30.1490.20">
    <property type="entry name" value="ATP-grasp fold, A domain"/>
    <property type="match status" value="1"/>
</dbReference>
<dbReference type="Gene3D" id="3.30.470.20">
    <property type="entry name" value="ATP-grasp fold, B domain"/>
    <property type="match status" value="1"/>
</dbReference>
<dbReference type="Gene3D" id="3.40.50.261">
    <property type="entry name" value="Succinyl-CoA synthetase domains"/>
    <property type="match status" value="1"/>
</dbReference>
<dbReference type="HAMAP" id="MF_00558">
    <property type="entry name" value="Succ_CoA_beta"/>
    <property type="match status" value="1"/>
</dbReference>
<dbReference type="InterPro" id="IPR011761">
    <property type="entry name" value="ATP-grasp"/>
</dbReference>
<dbReference type="InterPro" id="IPR013650">
    <property type="entry name" value="ATP-grasp_succ-CoA_synth-type"/>
</dbReference>
<dbReference type="InterPro" id="IPR013815">
    <property type="entry name" value="ATP_grasp_subdomain_1"/>
</dbReference>
<dbReference type="InterPro" id="IPR017866">
    <property type="entry name" value="Succ-CoA_synthase_bsu_CS"/>
</dbReference>
<dbReference type="InterPro" id="IPR005811">
    <property type="entry name" value="SUCC_ACL_C"/>
</dbReference>
<dbReference type="InterPro" id="IPR005809">
    <property type="entry name" value="Succ_CoA_ligase-like_bsu"/>
</dbReference>
<dbReference type="InterPro" id="IPR016102">
    <property type="entry name" value="Succinyl-CoA_synth-like"/>
</dbReference>
<dbReference type="NCBIfam" id="NF001913">
    <property type="entry name" value="PRK00696.1"/>
    <property type="match status" value="1"/>
</dbReference>
<dbReference type="NCBIfam" id="TIGR01016">
    <property type="entry name" value="sucCoAbeta"/>
    <property type="match status" value="1"/>
</dbReference>
<dbReference type="PANTHER" id="PTHR11815:SF10">
    <property type="entry name" value="SUCCINATE--COA LIGASE [GDP-FORMING] SUBUNIT BETA, MITOCHONDRIAL"/>
    <property type="match status" value="1"/>
</dbReference>
<dbReference type="PANTHER" id="PTHR11815">
    <property type="entry name" value="SUCCINYL-COA SYNTHETASE BETA CHAIN"/>
    <property type="match status" value="1"/>
</dbReference>
<dbReference type="Pfam" id="PF08442">
    <property type="entry name" value="ATP-grasp_2"/>
    <property type="match status" value="1"/>
</dbReference>
<dbReference type="Pfam" id="PF00549">
    <property type="entry name" value="Ligase_CoA"/>
    <property type="match status" value="1"/>
</dbReference>
<dbReference type="PIRSF" id="PIRSF001554">
    <property type="entry name" value="SucCS_beta"/>
    <property type="match status" value="1"/>
</dbReference>
<dbReference type="SUPFAM" id="SSF56059">
    <property type="entry name" value="Glutathione synthetase ATP-binding domain-like"/>
    <property type="match status" value="1"/>
</dbReference>
<dbReference type="SUPFAM" id="SSF52210">
    <property type="entry name" value="Succinyl-CoA synthetase domains"/>
    <property type="match status" value="1"/>
</dbReference>
<dbReference type="PROSITE" id="PS50975">
    <property type="entry name" value="ATP_GRASP"/>
    <property type="match status" value="1"/>
</dbReference>
<dbReference type="PROSITE" id="PS01217">
    <property type="entry name" value="SUCCINYL_COA_LIG_3"/>
    <property type="match status" value="1"/>
</dbReference>
<name>SUCC_BACP2</name>
<keyword id="KW-0067">ATP-binding</keyword>
<keyword id="KW-0436">Ligase</keyword>
<keyword id="KW-0460">Magnesium</keyword>
<keyword id="KW-0479">Metal-binding</keyword>
<keyword id="KW-0547">Nucleotide-binding</keyword>
<keyword id="KW-0816">Tricarboxylic acid cycle</keyword>
<accession>A8FD73</accession>
<protein>
    <recommendedName>
        <fullName evidence="1">Succinate--CoA ligase [ADP-forming] subunit beta</fullName>
        <ecNumber evidence="1">6.2.1.5</ecNumber>
    </recommendedName>
    <alternativeName>
        <fullName evidence="1">Succinyl-CoA synthetase subunit beta</fullName>
        <shortName evidence="1">SCS-beta</shortName>
    </alternativeName>
</protein>
<sequence>MNIHEYQGKEILRKYGVSVPNGKVAFTPDEAVKASEELESSVYVVKAQIHAGGRGKAGGVKIAKTKDEVKGFAEELLGKTLVTHQTGPEGREIKRLLIEEGCDIQKEYYVGLVLDRATSRIVLMASEEGGTEIEEVAEKTPEKIVKVVIDPAIGLQGYQAREVAFKINIPTKLVGQAVKFMTSLYNAFIEKDCSIAEINPLVVTGDGKVMALDAKLNFDSNALYRQKDILEYRDLDEEDPKEIEASKYDLSYISLDGNIGCMVNGAGLAMSTMDIIKHYGGDPANFLDVGGGATAEKVTEAFKIILSDQNVKGIFVNIFGGIMKCDVIAEGVVEATKQVGLTLPLVVRLEGTNVELGKKILSDSGLNITSAESMADGAEKIVSLVK</sequence>
<organism>
    <name type="scientific">Bacillus pumilus (strain SAFR-032)</name>
    <dbReference type="NCBI Taxonomy" id="315750"/>
    <lineage>
        <taxon>Bacteria</taxon>
        <taxon>Bacillati</taxon>
        <taxon>Bacillota</taxon>
        <taxon>Bacilli</taxon>
        <taxon>Bacillales</taxon>
        <taxon>Bacillaceae</taxon>
        <taxon>Bacillus</taxon>
    </lineage>
</organism>
<evidence type="ECO:0000255" key="1">
    <source>
        <dbReference type="HAMAP-Rule" id="MF_00558"/>
    </source>
</evidence>
<comment type="function">
    <text evidence="1">Succinyl-CoA synthetase functions in the citric acid cycle (TCA), coupling the hydrolysis of succinyl-CoA to the synthesis of either ATP or GTP and thus represents the only step of substrate-level phosphorylation in the TCA. The beta subunit provides nucleotide specificity of the enzyme and binds the substrate succinate, while the binding sites for coenzyme A and phosphate are found in the alpha subunit.</text>
</comment>
<comment type="catalytic activity">
    <reaction evidence="1">
        <text>succinate + ATP + CoA = succinyl-CoA + ADP + phosphate</text>
        <dbReference type="Rhea" id="RHEA:17661"/>
        <dbReference type="ChEBI" id="CHEBI:30031"/>
        <dbReference type="ChEBI" id="CHEBI:30616"/>
        <dbReference type="ChEBI" id="CHEBI:43474"/>
        <dbReference type="ChEBI" id="CHEBI:57287"/>
        <dbReference type="ChEBI" id="CHEBI:57292"/>
        <dbReference type="ChEBI" id="CHEBI:456216"/>
        <dbReference type="EC" id="6.2.1.5"/>
    </reaction>
    <physiologicalReaction direction="right-to-left" evidence="1">
        <dbReference type="Rhea" id="RHEA:17663"/>
    </physiologicalReaction>
</comment>
<comment type="catalytic activity">
    <reaction evidence="1">
        <text>GTP + succinate + CoA = succinyl-CoA + GDP + phosphate</text>
        <dbReference type="Rhea" id="RHEA:22120"/>
        <dbReference type="ChEBI" id="CHEBI:30031"/>
        <dbReference type="ChEBI" id="CHEBI:37565"/>
        <dbReference type="ChEBI" id="CHEBI:43474"/>
        <dbReference type="ChEBI" id="CHEBI:57287"/>
        <dbReference type="ChEBI" id="CHEBI:57292"/>
        <dbReference type="ChEBI" id="CHEBI:58189"/>
    </reaction>
    <physiologicalReaction direction="right-to-left" evidence="1">
        <dbReference type="Rhea" id="RHEA:22122"/>
    </physiologicalReaction>
</comment>
<comment type="cofactor">
    <cofactor evidence="1">
        <name>Mg(2+)</name>
        <dbReference type="ChEBI" id="CHEBI:18420"/>
    </cofactor>
    <text evidence="1">Binds 1 Mg(2+) ion per subunit.</text>
</comment>
<comment type="pathway">
    <text evidence="1">Carbohydrate metabolism; tricarboxylic acid cycle; succinate from succinyl-CoA (ligase route): step 1/1.</text>
</comment>
<comment type="subunit">
    <text evidence="1">Heterotetramer of two alpha and two beta subunits.</text>
</comment>
<comment type="similarity">
    <text evidence="1">Belongs to the succinate/malate CoA ligase beta subunit family.</text>
</comment>
<gene>
    <name evidence="1" type="primary">sucC</name>
    <name type="ordered locus">BPUM_1507</name>
</gene>